<accession>A0A072V9Z0</accession>
<keyword id="KW-0325">Glycoprotein</keyword>
<keyword id="KW-0379">Hydroxylation</keyword>
<keyword id="KW-1185">Reference proteome</keyword>
<keyword id="KW-0964">Secreted</keyword>
<keyword id="KW-0732">Signal</keyword>
<organism>
    <name type="scientific">Medicago truncatula</name>
    <name type="common">Barrel medic</name>
    <name type="synonym">Medicago tribuloides</name>
    <dbReference type="NCBI Taxonomy" id="3880"/>
    <lineage>
        <taxon>Eukaryota</taxon>
        <taxon>Viridiplantae</taxon>
        <taxon>Streptophyta</taxon>
        <taxon>Embryophyta</taxon>
        <taxon>Tracheophyta</taxon>
        <taxon>Spermatophyta</taxon>
        <taxon>Magnoliopsida</taxon>
        <taxon>eudicotyledons</taxon>
        <taxon>Gunneridae</taxon>
        <taxon>Pentapetalae</taxon>
        <taxon>rosids</taxon>
        <taxon>fabids</taxon>
        <taxon>Fabales</taxon>
        <taxon>Fabaceae</taxon>
        <taxon>Papilionoideae</taxon>
        <taxon>50 kb inversion clade</taxon>
        <taxon>NPAAA clade</taxon>
        <taxon>Hologalegina</taxon>
        <taxon>IRL clade</taxon>
        <taxon>Trifolieae</taxon>
        <taxon>Medicago</taxon>
    </lineage>
</organism>
<sequence>MASWRMLCFVLLFTSILICHDARPLPSSLSSSNGSPAFVESVKQVVKEIMRRKQLLGTQYSTNRLSPSGPDPHHH</sequence>
<feature type="signal peptide" evidence="3">
    <location>
        <begin position="1"/>
        <end position="22"/>
    </location>
</feature>
<feature type="chain" id="PRO_5014500424" description="CLAVATA3/ESR (CLE)-related protein 33">
    <location>
        <begin position="23"/>
        <end position="75"/>
    </location>
</feature>
<feature type="peptide" id="PRO_0000448636" description="CLE33p" evidence="1">
    <location>
        <begin position="64"/>
        <end position="75"/>
    </location>
</feature>
<feature type="modified residue" description="Hydroxyproline" evidence="2">
    <location>
        <position position="67"/>
    </location>
</feature>
<feature type="modified residue" description="Hydroxyproline" evidence="2">
    <location>
        <position position="70"/>
    </location>
</feature>
<feature type="glycosylation site" description="O-linked (Ara...) hydroxyproline" evidence="2">
    <location>
        <position position="70"/>
    </location>
</feature>
<comment type="function">
    <molecule>CLE33p</molecule>
    <text evidence="4">Signaling peptide involved in the regulation of root colonization by arbuscular mycorrhizal (AM) fungi (PubMed:31477892). Moves from root to shoot to function with the receptor kinase SUNN, in a signaling pathway that repress strigolactone biosynthetic genes and strigolactone content in the roots, and consequently reduces the promotion of further colonization by AM fungi (PubMed:31477892).</text>
</comment>
<comment type="subcellular location">
    <molecule>CLE33p</molecule>
    <subcellularLocation>
        <location evidence="6">Secreted</location>
        <location evidence="6">Extracellular space</location>
    </subcellularLocation>
</comment>
<comment type="tissue specificity">
    <molecule>CLE33p</molecule>
    <text evidence="4">Expressed in root vasculature.</text>
</comment>
<comment type="induction">
    <molecule>CLE33p</molecule>
    <text evidence="4">Induced in roots by treatment with inorganic phosphate.</text>
</comment>
<comment type="PTM">
    <molecule>CLE33p</molecule>
    <text evidence="2">The O-glycosylation (arabinosylation) of the hydroxyproline Pro-70 enhances binding affinity of the CLE33p peptide for its receptor.</text>
</comment>
<comment type="miscellaneous">
    <text evidence="4">Roots of plants overexpressing CLE33 exhibit normal growth, but reduced levels of colonization by arbuscular mycorrhizal (AM) fungi.</text>
</comment>
<comment type="similarity">
    <text evidence="6">Belongs to the CLV3/ESR signal peptide family.</text>
</comment>
<reference key="1">
    <citation type="journal article" date="2011" name="Nature">
        <title>The Medicago genome provides insight into the evolution of rhizobial symbioses.</title>
        <authorList>
            <person name="Young N.D."/>
            <person name="Debelle F."/>
            <person name="Oldroyd G.E.D."/>
            <person name="Geurts R."/>
            <person name="Cannon S.B."/>
            <person name="Udvardi M.K."/>
            <person name="Benedito V.A."/>
            <person name="Mayer K.F.X."/>
            <person name="Gouzy J."/>
            <person name="Schoof H."/>
            <person name="Van de Peer Y."/>
            <person name="Proost S."/>
            <person name="Cook D.R."/>
            <person name="Meyers B.C."/>
            <person name="Spannagl M."/>
            <person name="Cheung F."/>
            <person name="De Mita S."/>
            <person name="Krishnakumar V."/>
            <person name="Gundlach H."/>
            <person name="Zhou S."/>
            <person name="Mudge J."/>
            <person name="Bharti A.K."/>
            <person name="Murray J.D."/>
            <person name="Naoumkina M.A."/>
            <person name="Rosen B."/>
            <person name="Silverstein K.A.T."/>
            <person name="Tang H."/>
            <person name="Rombauts S."/>
            <person name="Zhao P.X."/>
            <person name="Zhou P."/>
            <person name="Barbe V."/>
            <person name="Bardou P."/>
            <person name="Bechner M."/>
            <person name="Bellec A."/>
            <person name="Berger A."/>
            <person name="Berges H."/>
            <person name="Bidwell S."/>
            <person name="Bisseling T."/>
            <person name="Choisne N."/>
            <person name="Couloux A."/>
            <person name="Denny R."/>
            <person name="Deshpande S."/>
            <person name="Dai X."/>
            <person name="Doyle J.J."/>
            <person name="Dudez A.-M."/>
            <person name="Farmer A.D."/>
            <person name="Fouteau S."/>
            <person name="Franken C."/>
            <person name="Gibelin C."/>
            <person name="Gish J."/>
            <person name="Goldstein S."/>
            <person name="Gonzalez A.J."/>
            <person name="Green P.J."/>
            <person name="Hallab A."/>
            <person name="Hartog M."/>
            <person name="Hua A."/>
            <person name="Humphray S.J."/>
            <person name="Jeong D.-H."/>
            <person name="Jing Y."/>
            <person name="Jocker A."/>
            <person name="Kenton S.M."/>
            <person name="Kim D.-J."/>
            <person name="Klee K."/>
            <person name="Lai H."/>
            <person name="Lang C."/>
            <person name="Lin S."/>
            <person name="Macmil S.L."/>
            <person name="Magdelenat G."/>
            <person name="Matthews L."/>
            <person name="McCorrison J."/>
            <person name="Monaghan E.L."/>
            <person name="Mun J.-H."/>
            <person name="Najar F.Z."/>
            <person name="Nicholson C."/>
            <person name="Noirot C."/>
            <person name="O'Bleness M."/>
            <person name="Paule C.R."/>
            <person name="Poulain J."/>
            <person name="Prion F."/>
            <person name="Qin B."/>
            <person name="Qu C."/>
            <person name="Retzel E.F."/>
            <person name="Riddle C."/>
            <person name="Sallet E."/>
            <person name="Samain S."/>
            <person name="Samson N."/>
            <person name="Sanders I."/>
            <person name="Saurat O."/>
            <person name="Scarpelli C."/>
            <person name="Schiex T."/>
            <person name="Segurens B."/>
            <person name="Severin A.J."/>
            <person name="Sherrier D.J."/>
            <person name="Shi R."/>
            <person name="Sims S."/>
            <person name="Singer S.R."/>
            <person name="Sinharoy S."/>
            <person name="Sterck L."/>
            <person name="Viollet A."/>
            <person name="Wang B.-B."/>
            <person name="Wang K."/>
            <person name="Wang M."/>
            <person name="Wang X."/>
            <person name="Warfsmann J."/>
            <person name="Weissenbach J."/>
            <person name="White D.D."/>
            <person name="White J.D."/>
            <person name="Wiley G.B."/>
            <person name="Wincker P."/>
            <person name="Xing Y."/>
            <person name="Yang L."/>
            <person name="Yao Z."/>
            <person name="Ying F."/>
            <person name="Zhai J."/>
            <person name="Zhou L."/>
            <person name="Zuber A."/>
            <person name="Denarie J."/>
            <person name="Dixon R.A."/>
            <person name="May G.D."/>
            <person name="Schwartz D.C."/>
            <person name="Rogers J."/>
            <person name="Quetier F."/>
            <person name="Town C.D."/>
            <person name="Roe B.A."/>
        </authorList>
    </citation>
    <scope>NUCLEOTIDE SEQUENCE [LARGE SCALE GENOMIC DNA]</scope>
    <source>
        <strain>cv. Jemalong A17</strain>
    </source>
</reference>
<reference key="2">
    <citation type="journal article" date="2014" name="BMC Genomics">
        <title>An improved genome release (version Mt4.0) for the model legume Medicago truncatula.</title>
        <authorList>
            <person name="Tang H."/>
            <person name="Krishnakumar V."/>
            <person name="Bidwell S."/>
            <person name="Rosen B."/>
            <person name="Chan A."/>
            <person name="Zhou S."/>
            <person name="Gentzbittel L."/>
            <person name="Childs K.L."/>
            <person name="Yandell M."/>
            <person name="Gundlach H."/>
            <person name="Mayer K.F."/>
            <person name="Schwartz D.C."/>
            <person name="Town C.D."/>
        </authorList>
    </citation>
    <scope>GENOME REANNOTATION</scope>
    <source>
        <strain>cv. Jemalong A17</strain>
    </source>
</reference>
<reference key="3">
    <citation type="journal article" date="2018" name="Nat. Plants">
        <title>Whole-genome landscape of Medicago truncatula symbiotic genes.</title>
        <authorList>
            <person name="Pecrix Y."/>
            <person name="Staton S.E."/>
            <person name="Sallet E."/>
            <person name="Lelandais-Briere C."/>
            <person name="Moreau S."/>
            <person name="Carrere S."/>
            <person name="Blein T."/>
            <person name="Jardinaud M.F."/>
            <person name="Latrasse D."/>
            <person name="Zouine M."/>
            <person name="Zahm M."/>
            <person name="Kreplak J."/>
            <person name="Mayjonade B."/>
            <person name="Satge C."/>
            <person name="Perez M."/>
            <person name="Cauet S."/>
            <person name="Marande W."/>
            <person name="Chantry-Darmon C."/>
            <person name="Lopez-Roques C."/>
            <person name="Bouchez O."/>
            <person name="Berard A."/>
            <person name="Debelle F."/>
            <person name="Munos S."/>
            <person name="Bendahmane A."/>
            <person name="Berges H."/>
            <person name="Niebel A."/>
            <person name="Buitink J."/>
            <person name="Frugier F."/>
            <person name="Benhamed M."/>
            <person name="Crespi M."/>
            <person name="Gouzy J."/>
            <person name="Gamas P."/>
        </authorList>
    </citation>
    <scope>NUCLEOTIDE SEQUENCE [LARGE SCALE GENOMIC DNA]</scope>
    <source>
        <strain>cv. Jemalong A17</strain>
    </source>
</reference>
<reference key="4">
    <citation type="journal article" date="2019" name="Nat. Plants">
        <title>A CLE-SUNN module regulates strigolactone content and fungal colonization in arbuscular mycorrhiza.</title>
        <authorList>
            <person name="Mueller L.M."/>
            <person name="Flokova K."/>
            <person name="Schnabel E."/>
            <person name="Sun X."/>
            <person name="Fei Z."/>
            <person name="Frugoli J."/>
            <person name="Bouwmeester H.J."/>
            <person name="Harrison M.J."/>
        </authorList>
    </citation>
    <scope>FUNCTION</scope>
    <scope>TISSUE SPECIFICITY</scope>
    <scope>INDUCTION</scope>
</reference>
<gene>
    <name evidence="5" type="primary">CLE33</name>
    <name evidence="7" type="ordered locus">MTR_2g078160</name>
    <name evidence="8" type="ORF">MtrunA17_Chr2g0316361</name>
</gene>
<proteinExistence type="evidence at transcript level"/>
<dbReference type="EMBL" id="CM001218">
    <property type="protein sequence ID" value="KEH38637.1"/>
    <property type="molecule type" value="Genomic_DNA"/>
</dbReference>
<dbReference type="EMBL" id="PSQE01000002">
    <property type="protein sequence ID" value="RHN74994.1"/>
    <property type="molecule type" value="Genomic_DNA"/>
</dbReference>
<dbReference type="RefSeq" id="XP_013464602.1">
    <property type="nucleotide sequence ID" value="XM_013609148.1"/>
</dbReference>
<dbReference type="STRING" id="3880.A0A072V9Z0"/>
<dbReference type="GlyCosmos" id="A0A072V9Z0">
    <property type="glycosylation" value="1 site, No reported glycans"/>
</dbReference>
<dbReference type="EnsemblPlants" id="rna11139">
    <property type="protein sequence ID" value="RHN74994.1"/>
    <property type="gene ID" value="gene11139"/>
</dbReference>
<dbReference type="Gramene" id="rna11139">
    <property type="protein sequence ID" value="RHN74994.1"/>
    <property type="gene ID" value="gene11139"/>
</dbReference>
<dbReference type="HOGENOM" id="CLU_194792_1_0_1"/>
<dbReference type="Proteomes" id="UP000002051">
    <property type="component" value="Chromosome 2"/>
</dbReference>
<dbReference type="Proteomes" id="UP000265566">
    <property type="component" value="Chromosome 2"/>
</dbReference>
<dbReference type="GO" id="GO:0005576">
    <property type="term" value="C:extracellular region"/>
    <property type="evidence" value="ECO:0007669"/>
    <property type="project" value="UniProtKB-SubCell"/>
</dbReference>
<dbReference type="GO" id="GO:0033612">
    <property type="term" value="F:receptor serine/threonine kinase binding"/>
    <property type="evidence" value="ECO:0000318"/>
    <property type="project" value="GO_Central"/>
</dbReference>
<dbReference type="InterPro" id="IPR039616">
    <property type="entry name" value="CLE1-4"/>
</dbReference>
<dbReference type="PANTHER" id="PTHR33869">
    <property type="entry name" value="CLAVATA3/ESR (CLE)-RELATED PROTEIN 3"/>
    <property type="match status" value="1"/>
</dbReference>
<dbReference type="PANTHER" id="PTHR33869:SF24">
    <property type="entry name" value="CLAVATA3_ESR (CLE)-RELATED PROTEIN 33"/>
    <property type="match status" value="1"/>
</dbReference>
<evidence type="ECO:0000250" key="1">
    <source>
        <dbReference type="UniProtKB" id="A0A072TRR8"/>
    </source>
</evidence>
<evidence type="ECO:0000250" key="2">
    <source>
        <dbReference type="UniProtKB" id="O49519"/>
    </source>
</evidence>
<evidence type="ECO:0000255" key="3"/>
<evidence type="ECO:0000269" key="4">
    <source>
    </source>
</evidence>
<evidence type="ECO:0000303" key="5">
    <source>
    </source>
</evidence>
<evidence type="ECO:0000305" key="6"/>
<evidence type="ECO:0000312" key="7">
    <source>
        <dbReference type="EMBL" id="KEH38637.1"/>
    </source>
</evidence>
<evidence type="ECO:0000312" key="8">
    <source>
        <dbReference type="EMBL" id="RHN74994.1"/>
    </source>
</evidence>
<protein>
    <recommendedName>
        <fullName evidence="5">CLAVATA3/ESR (CLE)-related protein 33</fullName>
        <shortName evidence="5">MtCLE33</shortName>
    </recommendedName>
    <component>
        <recommendedName>
            <fullName evidence="6">CLE33p</fullName>
        </recommendedName>
    </component>
</protein>
<name>CLE33_MEDTR</name>